<gene>
    <name evidence="4" type="primary">olsC</name>
    <name evidence="8" type="ORF">GXW80_03385</name>
</gene>
<feature type="chain" id="PRO_0000457774" description="Ornithine lipid ester-linked acyl 2-hydroxylase">
    <location>
        <begin position="1"/>
        <end position="281"/>
    </location>
</feature>
<feature type="region of interest" description="Disordered" evidence="1">
    <location>
        <begin position="1"/>
        <end position="29"/>
    </location>
</feature>
<feature type="compositionally biased region" description="Polar residues" evidence="1">
    <location>
        <begin position="1"/>
        <end position="24"/>
    </location>
</feature>
<sequence>MTESPLSAPAPTSNQSPAPEQTFGTAGIAPMDRPSAMTRFFMSIVAWAESLNLKYAKLGNPPVYDTATFPWAAEIEKDYPAIRAELEKVLLRQSELPTFQDISTDVKTISTDTRWKTFFLLGFGVKSEQNIKACPNTWAAVQKIPGLTTAMFSIFEPGKHLPAHRGPYNGVLRLHLGLIVPEPNDKLAIRVDNQVCHWQEGKALIFDDAYEHEAWNHTDKTRVVLFVDFVKPLKSPARFVNWALMNLAIFTPFIKEGLDNHKEWEKKFYAEAEAFRNRPKP</sequence>
<comment type="function">
    <text evidence="2 3">Involved in the biosynthesis of ornithine lipids (OLs), which are phosphorus-free membrane lipids (PubMed:16353552, PubMed:21205018). Catalyzes the hydroxylation at the 2 position of the secondary fatty acid of OL (PubMed:21205018). Contributes to symbiotic performance and acid tolerance (PubMed:16353552, PubMed:21205018).</text>
</comment>
<comment type="catalytic activity">
    <reaction evidence="3">
        <text>an N(2)-[(3R)-3-(2-saturated-acyloxy)acyl]-L-ornithine lipid + 2-oxoglutarate + O2 = a 2-hydroxyornithine lipid + succinate + CO2</text>
        <dbReference type="Rhea" id="RHEA:55756"/>
        <dbReference type="ChEBI" id="CHEBI:15379"/>
        <dbReference type="ChEBI" id="CHEBI:16526"/>
        <dbReference type="ChEBI" id="CHEBI:16810"/>
        <dbReference type="ChEBI" id="CHEBI:30031"/>
        <dbReference type="ChEBI" id="CHEBI:138473"/>
        <dbReference type="ChEBI" id="CHEBI:139171"/>
        <dbReference type="EC" id="1.14.11.58"/>
    </reaction>
    <physiologicalReaction direction="left-to-right" evidence="3">
        <dbReference type="Rhea" id="RHEA:55757"/>
    </physiologicalReaction>
</comment>
<comment type="pathway">
    <text evidence="6 7">Lipid metabolism.</text>
</comment>
<comment type="disruption phenotype">
    <text evidence="2 3">Partial deletion of this gene causes serious deficiencies in nodule development, nodulation competitiveness and nitrogen fixation on Phaseolus vulgaris plants (PubMed:16353552). Mutation affects the membrane lipid composition, particularly ornithine lipids (PubMed:16353552, PubMed:21205018). Mutant is deficient in OL hydroxylation and is more susceptible to acid and temperature stress (PubMed:21205018). Mutation causes an increase in nodule number that is reverted by the deletion of olsE (PubMed:21205018).</text>
</comment>
<comment type="similarity">
    <text evidence="5">Belongs to the aspartyl/asparaginyl beta-hydroxylase family.</text>
</comment>
<protein>
    <recommendedName>
        <fullName evidence="5">Ornithine lipid ester-linked acyl 2-hydroxylase</fullName>
        <ecNumber evidence="3">1.14.11.58</ecNumber>
    </recommendedName>
    <alternativeName>
        <fullName evidence="4">Ornithine lipid synthesis protein OlsC</fullName>
    </alternativeName>
</protein>
<organism>
    <name type="scientific">Rhizobium tropici</name>
    <dbReference type="NCBI Taxonomy" id="398"/>
    <lineage>
        <taxon>Bacteria</taxon>
        <taxon>Pseudomonadati</taxon>
        <taxon>Pseudomonadota</taxon>
        <taxon>Alphaproteobacteria</taxon>
        <taxon>Hyphomicrobiales</taxon>
        <taxon>Rhizobiaceae</taxon>
        <taxon>Rhizobium/Agrobacterium group</taxon>
        <taxon>Rhizobium</taxon>
    </lineage>
</organism>
<dbReference type="EC" id="1.14.11.58" evidence="3"/>
<dbReference type="EMBL" id="AY954450">
    <property type="protein sequence ID" value="AAY28727.1"/>
    <property type="molecule type" value="Genomic_DNA"/>
</dbReference>
<dbReference type="EMBL" id="JAADZA010000002">
    <property type="protein sequence ID" value="NEV10022.1"/>
    <property type="molecule type" value="Genomic_DNA"/>
</dbReference>
<dbReference type="SMR" id="Q4VFY5"/>
<dbReference type="BioCyc" id="MetaCyc:MONOMER-20225"/>
<dbReference type="Proteomes" id="UP000471190">
    <property type="component" value="Unassembled WGS sequence"/>
</dbReference>
<dbReference type="GO" id="GO:0016020">
    <property type="term" value="C:membrane"/>
    <property type="evidence" value="ECO:0007669"/>
    <property type="project" value="TreeGrafter"/>
</dbReference>
<dbReference type="GO" id="GO:0051213">
    <property type="term" value="F:dioxygenase activity"/>
    <property type="evidence" value="ECO:0007669"/>
    <property type="project" value="UniProtKB-KW"/>
</dbReference>
<dbReference type="GO" id="GO:0006629">
    <property type="term" value="P:lipid metabolic process"/>
    <property type="evidence" value="ECO:0007669"/>
    <property type="project" value="UniProtKB-KW"/>
</dbReference>
<dbReference type="Gene3D" id="2.60.120.330">
    <property type="entry name" value="B-lactam Antibiotic, Isopenicillin N Synthase, Chain"/>
    <property type="match status" value="1"/>
</dbReference>
<dbReference type="InterPro" id="IPR007803">
    <property type="entry name" value="Asp/Arg/Pro-Hydrxlase"/>
</dbReference>
<dbReference type="InterPro" id="IPR051821">
    <property type="entry name" value="Asp/Asn_beta-hydroxylase"/>
</dbReference>
<dbReference type="InterPro" id="IPR027443">
    <property type="entry name" value="IPNS-like_sf"/>
</dbReference>
<dbReference type="PANTHER" id="PTHR46332:SF5">
    <property type="entry name" value="ASPARTATE BETA-HYDROXYLASE DOMAIN CONTAINING 2"/>
    <property type="match status" value="1"/>
</dbReference>
<dbReference type="PANTHER" id="PTHR46332">
    <property type="entry name" value="ASPARTATE BETA-HYDROXYLASE DOMAIN-CONTAINING PROTEIN 2"/>
    <property type="match status" value="1"/>
</dbReference>
<dbReference type="Pfam" id="PF05118">
    <property type="entry name" value="Asp_Arg_Hydrox"/>
    <property type="match status" value="1"/>
</dbReference>
<dbReference type="SUPFAM" id="SSF51197">
    <property type="entry name" value="Clavaminate synthase-like"/>
    <property type="match status" value="1"/>
</dbReference>
<proteinExistence type="evidence at protein level"/>
<accession>Q4VFY5</accession>
<name>OLSC_RHITR</name>
<keyword id="KW-0223">Dioxygenase</keyword>
<keyword id="KW-0444">Lipid biosynthesis</keyword>
<keyword id="KW-0443">Lipid metabolism</keyword>
<keyword id="KW-0560">Oxidoreductase</keyword>
<evidence type="ECO:0000256" key="1">
    <source>
        <dbReference type="SAM" id="MobiDB-lite"/>
    </source>
</evidence>
<evidence type="ECO:0000269" key="2">
    <source>
    </source>
</evidence>
<evidence type="ECO:0000269" key="3">
    <source>
    </source>
</evidence>
<evidence type="ECO:0000303" key="4">
    <source>
    </source>
</evidence>
<evidence type="ECO:0000305" key="5"/>
<evidence type="ECO:0000305" key="6">
    <source>
    </source>
</evidence>
<evidence type="ECO:0000305" key="7">
    <source>
    </source>
</evidence>
<evidence type="ECO:0000312" key="8">
    <source>
        <dbReference type="EMBL" id="NEV10022.1"/>
    </source>
</evidence>
<reference key="1">
    <citation type="journal article" date="2005" name="Mol. Plant Microbe Interact.">
        <title>A ClC chloride channel homolog and ornithine-containing membrane lipids of Rhizobium tropici CIAT899 are involved in symbiotic efficiency and acid tolerance.</title>
        <authorList>
            <person name="Rojas-Jimenez K."/>
            <person name="Sohlenkamp C."/>
            <person name="Geiger O."/>
            <person name="Martinez-Romero E."/>
            <person name="Werner D."/>
            <person name="Vinuesa P."/>
        </authorList>
    </citation>
    <scope>NUCLEOTIDE SEQUENCE [GENOMIC DNA]</scope>
    <scope>FUNCTION</scope>
    <scope>DISRUPTION PHENOTYPE</scope>
    <source>
        <strain>CIAT899</strain>
    </source>
</reference>
<reference key="2">
    <citation type="submission" date="2020-02" db="EMBL/GenBank/DDBJ databases">
        <title>Draft genome sequence of Rhizobium tropici.</title>
        <authorList>
            <person name="Khayi S."/>
            <person name="Jemo M."/>
        </authorList>
    </citation>
    <scope>NUCLEOTIDE SEQUENCE [LARGE SCALE GENOMIC DNA]</scope>
    <source>
        <strain>A12</strain>
    </source>
</reference>
<reference key="3">
    <citation type="journal article" date="2011" name="Mol. Microbiol.">
        <title>Hydroxylated ornithine lipids increase stress tolerance in Rhizobium tropici CIAT899.</title>
        <authorList>
            <person name="Vences-Guzman M.A."/>
            <person name="Guan Z."/>
            <person name="Ormeno-Orrillo E."/>
            <person name="Gonzalez-Silva N."/>
            <person name="Lopez-Lara I.M."/>
            <person name="Martinez-Romero E."/>
            <person name="Geiger O."/>
            <person name="Sohlenkamp C."/>
        </authorList>
    </citation>
    <scope>FUNCTION</scope>
    <scope>CATALYTIC ACTIVITY</scope>
    <scope>DISRUPTION PHENOTYPE</scope>
    <source>
        <strain>CIAT899</strain>
    </source>
</reference>